<accession>B6DCT7</accession>
<sequence>MKVLVLFSVLFLTLFSYSSTEAMDEFDSDAEEDMLSLMANEQVRAKACTPRLHDCSHDRHSCCRGELFKDVCYCFYPEGEDKTEVCSCQQPKSHKYIEKVVDKARTVVG</sequence>
<feature type="signal peptide" evidence="3">
    <location>
        <begin position="1"/>
        <end position="22"/>
    </location>
</feature>
<feature type="propeptide" id="PRO_0000401687" evidence="1">
    <location>
        <begin position="23"/>
        <end position="44"/>
    </location>
</feature>
<feature type="chain" id="PRO_0000401688" description="U4-lycotoxin-Ls1d">
    <location>
        <begin position="45"/>
        <end position="109"/>
    </location>
</feature>
<feature type="region of interest" description="Knottin domain" evidence="2">
    <location>
        <begin position="45"/>
        <end position="88"/>
    </location>
</feature>
<feature type="region of interest" description="Linear cationic cytotoxin domain" evidence="2">
    <location>
        <begin position="89"/>
        <end position="108"/>
    </location>
</feature>
<feature type="disulfide bond" evidence="2">
    <location>
        <begin position="48"/>
        <end position="63"/>
    </location>
</feature>
<feature type="disulfide bond" evidence="2">
    <location>
        <begin position="55"/>
        <end position="72"/>
    </location>
</feature>
<feature type="disulfide bond" evidence="2">
    <location>
        <begin position="62"/>
        <end position="88"/>
    </location>
</feature>
<feature type="disulfide bond" evidence="2">
    <location>
        <begin position="74"/>
        <end position="86"/>
    </location>
</feature>
<protein>
    <recommendedName>
        <fullName evidence="4">U4-lycotoxin-Ls1d</fullName>
        <shortName evidence="4">U4-LCTX-Ls1d</shortName>
    </recommendedName>
    <alternativeName>
        <fullName>Toxin-like structure LSTX-C5</fullName>
    </alternativeName>
</protein>
<dbReference type="EMBL" id="EU926021">
    <property type="protein sequence ID" value="ACI41353.1"/>
    <property type="molecule type" value="mRNA"/>
</dbReference>
<dbReference type="EMBL" id="FM864025">
    <property type="protein sequence ID" value="CAS03623.1"/>
    <property type="molecule type" value="mRNA"/>
</dbReference>
<dbReference type="SMR" id="B6DCT7"/>
<dbReference type="ArachnoServer" id="AS000970">
    <property type="toxin name" value="U4-lycotoxin-Ls1d"/>
</dbReference>
<dbReference type="GO" id="GO:0005576">
    <property type="term" value="C:extracellular region"/>
    <property type="evidence" value="ECO:0007669"/>
    <property type="project" value="UniProtKB-SubCell"/>
</dbReference>
<dbReference type="GO" id="GO:0005246">
    <property type="term" value="F:calcium channel regulator activity"/>
    <property type="evidence" value="ECO:0007669"/>
    <property type="project" value="UniProtKB-KW"/>
</dbReference>
<dbReference type="GO" id="GO:0090729">
    <property type="term" value="F:toxin activity"/>
    <property type="evidence" value="ECO:0007669"/>
    <property type="project" value="UniProtKB-KW"/>
</dbReference>
<dbReference type="InterPro" id="IPR019553">
    <property type="entry name" value="Spider_toxin_CSTX_knottin"/>
</dbReference>
<dbReference type="InterPro" id="IPR011142">
    <property type="entry name" value="Spider_toxin_CSTX_Knottin_CS"/>
</dbReference>
<dbReference type="Pfam" id="PF10530">
    <property type="entry name" value="Toxin_35"/>
    <property type="match status" value="1"/>
</dbReference>
<dbReference type="PROSITE" id="PS60029">
    <property type="entry name" value="SPIDER_CSTX"/>
    <property type="match status" value="1"/>
</dbReference>
<name>TX405_LYCSI</name>
<evidence type="ECO:0000250" key="1"/>
<evidence type="ECO:0000250" key="2">
    <source>
        <dbReference type="UniProtKB" id="B3EWH0"/>
    </source>
</evidence>
<evidence type="ECO:0000255" key="3"/>
<evidence type="ECO:0000305" key="4"/>
<evidence type="ECO:0000305" key="5">
    <source>
    </source>
</evidence>
<reference key="1">
    <citation type="journal article" date="2010" name="Zoology">
        <title>Transcriptome analysis of the venom glands of the Chinese wolf spider Lycosa singoriensis.</title>
        <authorList>
            <person name="Zhang Y."/>
            <person name="Chen J."/>
            <person name="Tang X."/>
            <person name="Wang F."/>
            <person name="Jiang L."/>
            <person name="Xiong X."/>
            <person name="Wang M."/>
            <person name="Rong M."/>
            <person name="Liu Z."/>
            <person name="Liang S."/>
        </authorList>
    </citation>
    <scope>NUCLEOTIDE SEQUENCE [LARGE SCALE MRNA]</scope>
    <source>
        <tissue>Venom gland</tissue>
    </source>
</reference>
<keyword id="KW-0108">Calcium channel impairing toxin</keyword>
<keyword id="KW-1015">Disulfide bond</keyword>
<keyword id="KW-0872">Ion channel impairing toxin</keyword>
<keyword id="KW-0960">Knottin</keyword>
<keyword id="KW-0964">Secreted</keyword>
<keyword id="KW-0732">Signal</keyword>
<keyword id="KW-0800">Toxin</keyword>
<comment type="function">
    <text evidence="2">Enhances the high-affinity desensitization of human P2RX3 purinoceptors.</text>
</comment>
<comment type="subcellular location">
    <subcellularLocation>
        <location evidence="1">Secreted</location>
    </subcellularLocation>
</comment>
<comment type="tissue specificity">
    <text evidence="5">Expressed by the venom gland.</text>
</comment>
<comment type="domain">
    <text evidence="2">The toxin is composed of 2 domains: a highly rigid N-terminal inhibitor cystine knot (knottin) domain and a rather flexible C-terminal linear cationic cytotoxin domain that forms amphiphilic alpha-helices.</text>
</comment>
<comment type="domain">
    <text evidence="2">The presence of a 'disulfide through disulfide knot' structurally defines this protein as a knottin.</text>
</comment>
<comment type="similarity">
    <text evidence="4">Belongs to the neurotoxin 19 (CSTX) family. 05 (U4-Lctx) subfamily.</text>
</comment>
<organism>
    <name type="scientific">Lycosa singoriensis</name>
    <name type="common">Wolf spider</name>
    <name type="synonym">Aranea singoriensis</name>
    <dbReference type="NCBI Taxonomy" id="434756"/>
    <lineage>
        <taxon>Eukaryota</taxon>
        <taxon>Metazoa</taxon>
        <taxon>Ecdysozoa</taxon>
        <taxon>Arthropoda</taxon>
        <taxon>Chelicerata</taxon>
        <taxon>Arachnida</taxon>
        <taxon>Araneae</taxon>
        <taxon>Araneomorphae</taxon>
        <taxon>Entelegynae</taxon>
        <taxon>Lycosoidea</taxon>
        <taxon>Lycosidae</taxon>
        <taxon>Lycosa</taxon>
    </lineage>
</organism>
<proteinExistence type="inferred from homology"/>